<gene>
    <name evidence="1" type="primary">mnmG</name>
    <name evidence="1" type="synonym">gidA</name>
    <name type="ordered locus">FTA_0780</name>
</gene>
<evidence type="ECO:0000255" key="1">
    <source>
        <dbReference type="HAMAP-Rule" id="MF_00129"/>
    </source>
</evidence>
<dbReference type="EMBL" id="CP000803">
    <property type="protein sequence ID" value="ABU61256.1"/>
    <property type="molecule type" value="Genomic_DNA"/>
</dbReference>
<dbReference type="RefSeq" id="WP_003015250.1">
    <property type="nucleotide sequence ID" value="NC_009749.1"/>
</dbReference>
<dbReference type="SMR" id="A7NBA3"/>
<dbReference type="KEGG" id="fta:FTA_0780"/>
<dbReference type="HOGENOM" id="CLU_007831_2_2_6"/>
<dbReference type="GO" id="GO:0005829">
    <property type="term" value="C:cytosol"/>
    <property type="evidence" value="ECO:0007669"/>
    <property type="project" value="TreeGrafter"/>
</dbReference>
<dbReference type="GO" id="GO:0050660">
    <property type="term" value="F:flavin adenine dinucleotide binding"/>
    <property type="evidence" value="ECO:0007669"/>
    <property type="project" value="UniProtKB-UniRule"/>
</dbReference>
<dbReference type="GO" id="GO:0030488">
    <property type="term" value="P:tRNA methylation"/>
    <property type="evidence" value="ECO:0007669"/>
    <property type="project" value="TreeGrafter"/>
</dbReference>
<dbReference type="GO" id="GO:0002098">
    <property type="term" value="P:tRNA wobble uridine modification"/>
    <property type="evidence" value="ECO:0007669"/>
    <property type="project" value="InterPro"/>
</dbReference>
<dbReference type="FunFam" id="1.10.10.1800:FF:000001">
    <property type="entry name" value="tRNA uridine 5-carboxymethylaminomethyl modification enzyme MnmG"/>
    <property type="match status" value="1"/>
</dbReference>
<dbReference type="FunFam" id="1.10.150.570:FF:000001">
    <property type="entry name" value="tRNA uridine 5-carboxymethylaminomethyl modification enzyme MnmG"/>
    <property type="match status" value="1"/>
</dbReference>
<dbReference type="FunFam" id="3.50.50.60:FF:000002">
    <property type="entry name" value="tRNA uridine 5-carboxymethylaminomethyl modification enzyme MnmG"/>
    <property type="match status" value="1"/>
</dbReference>
<dbReference type="FunFam" id="3.50.50.60:FF:000010">
    <property type="entry name" value="tRNA uridine 5-carboxymethylaminomethyl modification enzyme MnmG"/>
    <property type="match status" value="1"/>
</dbReference>
<dbReference type="Gene3D" id="3.50.50.60">
    <property type="entry name" value="FAD/NAD(P)-binding domain"/>
    <property type="match status" value="2"/>
</dbReference>
<dbReference type="Gene3D" id="1.10.150.570">
    <property type="entry name" value="GidA associated domain, C-terminal subdomain"/>
    <property type="match status" value="1"/>
</dbReference>
<dbReference type="Gene3D" id="1.10.10.1800">
    <property type="entry name" value="tRNA uridine 5-carboxymethylaminomethyl modification enzyme MnmG/GidA"/>
    <property type="match status" value="1"/>
</dbReference>
<dbReference type="HAMAP" id="MF_00129">
    <property type="entry name" value="MnmG_GidA"/>
    <property type="match status" value="1"/>
</dbReference>
<dbReference type="InterPro" id="IPR036188">
    <property type="entry name" value="FAD/NAD-bd_sf"/>
</dbReference>
<dbReference type="InterPro" id="IPR049312">
    <property type="entry name" value="GIDA_C_N"/>
</dbReference>
<dbReference type="InterPro" id="IPR004416">
    <property type="entry name" value="MnmG"/>
</dbReference>
<dbReference type="InterPro" id="IPR002218">
    <property type="entry name" value="MnmG-rel"/>
</dbReference>
<dbReference type="InterPro" id="IPR020595">
    <property type="entry name" value="MnmG-rel_CS"/>
</dbReference>
<dbReference type="InterPro" id="IPR026904">
    <property type="entry name" value="MnmG_C"/>
</dbReference>
<dbReference type="InterPro" id="IPR047001">
    <property type="entry name" value="MnmG_C_subdom"/>
</dbReference>
<dbReference type="InterPro" id="IPR044920">
    <property type="entry name" value="MnmG_C_subdom_sf"/>
</dbReference>
<dbReference type="InterPro" id="IPR040131">
    <property type="entry name" value="MnmG_N"/>
</dbReference>
<dbReference type="NCBIfam" id="TIGR00136">
    <property type="entry name" value="mnmG_gidA"/>
    <property type="match status" value="1"/>
</dbReference>
<dbReference type="PANTHER" id="PTHR11806">
    <property type="entry name" value="GLUCOSE INHIBITED DIVISION PROTEIN A"/>
    <property type="match status" value="1"/>
</dbReference>
<dbReference type="PANTHER" id="PTHR11806:SF0">
    <property type="entry name" value="PROTEIN MTO1 HOMOLOG, MITOCHONDRIAL"/>
    <property type="match status" value="1"/>
</dbReference>
<dbReference type="Pfam" id="PF01134">
    <property type="entry name" value="GIDA"/>
    <property type="match status" value="1"/>
</dbReference>
<dbReference type="Pfam" id="PF21680">
    <property type="entry name" value="GIDA_C_1st"/>
    <property type="match status" value="1"/>
</dbReference>
<dbReference type="Pfam" id="PF13932">
    <property type="entry name" value="SAM_GIDA_C"/>
    <property type="match status" value="1"/>
</dbReference>
<dbReference type="SMART" id="SM01228">
    <property type="entry name" value="GIDA_assoc_3"/>
    <property type="match status" value="1"/>
</dbReference>
<dbReference type="SUPFAM" id="SSF51905">
    <property type="entry name" value="FAD/NAD(P)-binding domain"/>
    <property type="match status" value="1"/>
</dbReference>
<dbReference type="PROSITE" id="PS01280">
    <property type="entry name" value="GIDA_1"/>
    <property type="match status" value="1"/>
</dbReference>
<reference key="1">
    <citation type="journal article" date="2009" name="PLoS ONE">
        <title>Complete genome sequence of Francisella tularensis subspecies holarctica FTNF002-00.</title>
        <authorList>
            <person name="Barabote R.D."/>
            <person name="Xie G."/>
            <person name="Brettin T.S."/>
            <person name="Hinrichs S.H."/>
            <person name="Fey P.D."/>
            <person name="Jay J.J."/>
            <person name="Engle J.L."/>
            <person name="Godbole S.D."/>
            <person name="Noronha J.M."/>
            <person name="Scheuermann R.H."/>
            <person name="Zhou L.W."/>
            <person name="Lion C."/>
            <person name="Dempsey M.P."/>
        </authorList>
    </citation>
    <scope>NUCLEOTIDE SEQUENCE [LARGE SCALE GENOMIC DNA]</scope>
    <source>
        <strain>FTNF002-00 / FTA</strain>
    </source>
</reference>
<protein>
    <recommendedName>
        <fullName evidence="1">tRNA uridine 5-carboxymethylaminomethyl modification enzyme MnmG</fullName>
    </recommendedName>
    <alternativeName>
        <fullName evidence="1">Glucose-inhibited division protein A</fullName>
    </alternativeName>
</protein>
<feature type="chain" id="PRO_1000016598" description="tRNA uridine 5-carboxymethylaminomethyl modification enzyme MnmG">
    <location>
        <begin position="1"/>
        <end position="627"/>
    </location>
</feature>
<feature type="binding site" evidence="1">
    <location>
        <begin position="13"/>
        <end position="18"/>
    </location>
    <ligand>
        <name>FAD</name>
        <dbReference type="ChEBI" id="CHEBI:57692"/>
    </ligand>
</feature>
<feature type="binding site" evidence="1">
    <location>
        <position position="125"/>
    </location>
    <ligand>
        <name>FAD</name>
        <dbReference type="ChEBI" id="CHEBI:57692"/>
    </ligand>
</feature>
<feature type="binding site" evidence="1">
    <location>
        <position position="180"/>
    </location>
    <ligand>
        <name>FAD</name>
        <dbReference type="ChEBI" id="CHEBI:57692"/>
    </ligand>
</feature>
<feature type="binding site" evidence="1">
    <location>
        <begin position="274"/>
        <end position="288"/>
    </location>
    <ligand>
        <name>NAD(+)</name>
        <dbReference type="ChEBI" id="CHEBI:57540"/>
    </ligand>
</feature>
<feature type="binding site" evidence="1">
    <location>
        <position position="371"/>
    </location>
    <ligand>
        <name>FAD</name>
        <dbReference type="ChEBI" id="CHEBI:57692"/>
    </ligand>
</feature>
<name>MNMG_FRATF</name>
<comment type="function">
    <text evidence="1">NAD-binding protein involved in the addition of a carboxymethylaminomethyl (cmnm) group at the wobble position (U34) of certain tRNAs, forming tRNA-cmnm(5)s(2)U34.</text>
</comment>
<comment type="cofactor">
    <cofactor evidence="1">
        <name>FAD</name>
        <dbReference type="ChEBI" id="CHEBI:57692"/>
    </cofactor>
</comment>
<comment type="subunit">
    <text evidence="1">Homodimer. Heterotetramer of two MnmE and two MnmG subunits.</text>
</comment>
<comment type="subcellular location">
    <subcellularLocation>
        <location evidence="1">Cytoplasm</location>
    </subcellularLocation>
</comment>
<comment type="similarity">
    <text evidence="1">Belongs to the MnmG family.</text>
</comment>
<sequence>MIYDYGYDVIVVGGGHAGVEAASASARIGAKTLLLTHNIDTIGQMSCNPAIGGIGKGHLVKEIDAMGGVMAKAIDMAGIQFRILNSRKGPAVRATRAQADRVLYKKAINSLINNQENLDIFQDSVDDLVVENNTVCGAITKTGITFRAKKVVLTVGTFLGGKIHIGKVSNAGGRAGDQPSNALAARLRSLPFRVDRLKTGTPPRIDRRSVDFSVMEVQHGDNPTPYFSFFSKGKIEHPRQIPCYITYTNNETHKIITDNLDKSAMYSGLIEGIGPRYCPSIEDKVVRFADKERHQIFVEPEGLNSIELYPNGLSTSLPFEVQCNYIRSIKGFEKAFIMRPGYAIEYDFFDPRDLKPTLETKHIKNLYFAGQINGTTGYEEAGAQGLVASINAAISIDSDKSWYPTRADSYIGVLIDDLITKGTKEPYRMFTSRAEYRLILREDNADLRLSDKACELGLLSKEDQQHFISKKNAIIENIAMMKNTWIGPQTQKARDLEKFLDKKMTRESTLFDLLKRPEIDYSKLQQISELNLNLQDDAVIEQIEISAKYSGYIERQNKDIEKTATLEQKAIPTDFNYSQVKGLSNEVLQKLTEQKPTTLGEASRIPGITPAAISLLTIYMKKTGFIK</sequence>
<organism>
    <name type="scientific">Francisella tularensis subsp. holarctica (strain FTNF002-00 / FTA)</name>
    <dbReference type="NCBI Taxonomy" id="458234"/>
    <lineage>
        <taxon>Bacteria</taxon>
        <taxon>Pseudomonadati</taxon>
        <taxon>Pseudomonadota</taxon>
        <taxon>Gammaproteobacteria</taxon>
        <taxon>Thiotrichales</taxon>
        <taxon>Francisellaceae</taxon>
        <taxon>Francisella</taxon>
    </lineage>
</organism>
<accession>A7NBA3</accession>
<keyword id="KW-0963">Cytoplasm</keyword>
<keyword id="KW-0274">FAD</keyword>
<keyword id="KW-0285">Flavoprotein</keyword>
<keyword id="KW-0520">NAD</keyword>
<keyword id="KW-0819">tRNA processing</keyword>
<proteinExistence type="inferred from homology"/>